<proteinExistence type="evidence at transcript level"/>
<protein>
    <recommendedName>
        <fullName>Mediator of RNA polymerase II transcription subunit 27-B</fullName>
    </recommendedName>
    <alternativeName>
        <fullName>Cofactor required for Sp1 transcriptional activation subunit 8-B</fullName>
        <shortName>CRSP complex subunit 8-B</shortName>
    </alternativeName>
    <alternativeName>
        <fullName>Mediator complex subunit 27-B</fullName>
    </alternativeName>
</protein>
<gene>
    <name type="primary">med27-b</name>
    <name type="synonym">crsp8-b</name>
</gene>
<sequence length="311" mass="35424">MVDALNVGVNLEAFSQAIHCIQALRSSVTRVFDCLKDGMKNKESQEARERTFVSEFQDNLHSVNGDLNELERLSNLVGKPSENLPLHNSGLLSLDPVHDKTPLYSQLLQAYKWSNKLQFHAGLASGLLNQQSLKRSAIQMGVSTKRRPKVQPTTLALPPQYIDDVISRIDRMFPEMTIQLSRPNGSSAILLVILGKVLKVIVVMRSLFIDRTIVKGYTENVYTEDGKLDIWSKSNYQVFQKVTDHATTALLHYQLPQMPDVVVRSFMTWLRSYIKLFQAPCQRCGKFLQDGLPPTWRDFRTLESFHDSCRQ</sequence>
<evidence type="ECO:0000250" key="1"/>
<evidence type="ECO:0000305" key="2"/>
<keyword id="KW-0010">Activator</keyword>
<keyword id="KW-0539">Nucleus</keyword>
<keyword id="KW-1185">Reference proteome</keyword>
<keyword id="KW-0804">Transcription</keyword>
<keyword id="KW-0805">Transcription regulation</keyword>
<name>MD27B_XENLA</name>
<feature type="chain" id="PRO_0000305014" description="Mediator of RNA polymerase II transcription subunit 27-B">
    <location>
        <begin position="1"/>
        <end position="311"/>
    </location>
</feature>
<comment type="function">
    <text evidence="1">Component of the Mediator complex, a coactivator involved in the regulated transcription of nearly all RNA polymerase II-dependent genes. Mediator functions as a bridge to convey information from gene-specific regulatory proteins to the basal RNA polymerase II transcription machinery. Mediator is recruited to promoters by direct interactions with regulatory proteins and serves as a scaffold for the assembly of a functional preinitiation complex with RNA polymerase II and the general transcription factors (By similarity).</text>
</comment>
<comment type="subunit">
    <text evidence="1">Component of the Mediator complex.</text>
</comment>
<comment type="subcellular location">
    <subcellularLocation>
        <location evidence="1">Nucleus</location>
    </subcellularLocation>
</comment>
<comment type="similarity">
    <text evidence="2">Belongs to the Mediator complex subunit 27 family.</text>
</comment>
<accession>Q3B8G8</accession>
<reference key="1">
    <citation type="submission" date="2005-10" db="EMBL/GenBank/DDBJ databases">
        <authorList>
            <consortium name="NIH - Xenopus Gene Collection (XGC) project"/>
        </authorList>
    </citation>
    <scope>NUCLEOTIDE SEQUENCE [LARGE SCALE MRNA]</scope>
    <source>
        <tissue>Testis</tissue>
    </source>
</reference>
<dbReference type="EMBL" id="BC106444">
    <property type="protein sequence ID" value="AAI06445.1"/>
    <property type="molecule type" value="mRNA"/>
</dbReference>
<dbReference type="RefSeq" id="NP_001089740.1">
    <property type="nucleotide sequence ID" value="NM_001096271.1"/>
</dbReference>
<dbReference type="SMR" id="Q3B8G8"/>
<dbReference type="DNASU" id="734803"/>
<dbReference type="GeneID" id="734803"/>
<dbReference type="KEGG" id="xla:734803"/>
<dbReference type="AGR" id="Xenbase:XB-GENE-6255024"/>
<dbReference type="CTD" id="734803"/>
<dbReference type="Xenbase" id="XB-GENE-6255024">
    <property type="gene designation" value="med27.S"/>
</dbReference>
<dbReference type="OMA" id="GLVIEWV"/>
<dbReference type="OrthoDB" id="1868004at2759"/>
<dbReference type="Proteomes" id="UP000186698">
    <property type="component" value="Chromosome 8S"/>
</dbReference>
<dbReference type="Bgee" id="734803">
    <property type="expression patterns" value="Expressed in oocyte and 20 other cell types or tissues"/>
</dbReference>
<dbReference type="GO" id="GO:0016592">
    <property type="term" value="C:mediator complex"/>
    <property type="evidence" value="ECO:0000318"/>
    <property type="project" value="GO_Central"/>
</dbReference>
<dbReference type="GO" id="GO:0003713">
    <property type="term" value="F:transcription coactivator activity"/>
    <property type="evidence" value="ECO:0000318"/>
    <property type="project" value="GO_Central"/>
</dbReference>
<dbReference type="GO" id="GO:0006357">
    <property type="term" value="P:regulation of transcription by RNA polymerase II"/>
    <property type="evidence" value="ECO:0000318"/>
    <property type="project" value="GO_Central"/>
</dbReference>
<dbReference type="InterPro" id="IPR021627">
    <property type="entry name" value="Mediator_Med27"/>
</dbReference>
<dbReference type="PANTHER" id="PTHR13130">
    <property type="entry name" value="34 KDA TRANSCRIPTIONAL CO-ACTIVATOR-RELATED"/>
    <property type="match status" value="1"/>
</dbReference>
<dbReference type="PANTHER" id="PTHR13130:SF4">
    <property type="entry name" value="MEDIATOR OF RNA POLYMERASE II TRANSCRIPTION SUBUNIT 27"/>
    <property type="match status" value="1"/>
</dbReference>
<dbReference type="Pfam" id="PF11571">
    <property type="entry name" value="Med27"/>
    <property type="match status" value="1"/>
</dbReference>
<organism>
    <name type="scientific">Xenopus laevis</name>
    <name type="common">African clawed frog</name>
    <dbReference type="NCBI Taxonomy" id="8355"/>
    <lineage>
        <taxon>Eukaryota</taxon>
        <taxon>Metazoa</taxon>
        <taxon>Chordata</taxon>
        <taxon>Craniata</taxon>
        <taxon>Vertebrata</taxon>
        <taxon>Euteleostomi</taxon>
        <taxon>Amphibia</taxon>
        <taxon>Batrachia</taxon>
        <taxon>Anura</taxon>
        <taxon>Pipoidea</taxon>
        <taxon>Pipidae</taxon>
        <taxon>Xenopodinae</taxon>
        <taxon>Xenopus</taxon>
        <taxon>Xenopus</taxon>
    </lineage>
</organism>